<protein>
    <recommendedName>
        <fullName>Securin</fullName>
    </recommendedName>
    <alternativeName>
        <fullName>Pituitary tumor-transforming gene 1 protein</fullName>
    </alternativeName>
</protein>
<keyword id="KW-0007">Acetylation</keyword>
<keyword id="KW-0131">Cell cycle</keyword>
<keyword id="KW-0132">Cell division</keyword>
<keyword id="KW-0159">Chromosome partition</keyword>
<keyword id="KW-0963">Cytoplasm</keyword>
<keyword id="KW-0227">DNA damage</keyword>
<keyword id="KW-0234">DNA repair</keyword>
<keyword id="KW-0498">Mitosis</keyword>
<keyword id="KW-0539">Nucleus</keyword>
<keyword id="KW-0597">Phosphoprotein</keyword>
<keyword id="KW-0656">Proto-oncogene</keyword>
<keyword id="KW-1185">Reference proteome</keyword>
<keyword id="KW-0677">Repeat</keyword>
<keyword id="KW-0729">SH3-binding</keyword>
<keyword id="KW-0832">Ubl conjugation</keyword>
<sequence length="202" mass="22038">MATLIYVDKENGEPGTRVAAKDGLKLGSAPSIKALDGRSQVSTPRFGKTFDAPPALPKATRKALGTVNRATEKSVKTKGPLKQKQPSFSAKKMTEKTVKAKSSVPASDDAYPEIEKFFPFNPLDFESFDLPEEHQIAHLPLSGVPLMILDEERELEKLFQLGPPSPVRMPSPPWESNLLQSPSSILSTLDVELPPVCCDIDI</sequence>
<reference key="1">
    <citation type="submission" date="2006-08" db="EMBL/GenBank/DDBJ databases">
        <title>Positive selection in transcription factor genes on the human lineage.</title>
        <authorList>
            <person name="Nickel G.C."/>
            <person name="Tefft D.L."/>
            <person name="Trevarthen K."/>
            <person name="Funt J."/>
            <person name="Adams M.D."/>
        </authorList>
    </citation>
    <scope>NUCLEOTIDE SEQUENCE [GENOMIC DNA]</scope>
</reference>
<evidence type="ECO:0000250" key="1"/>
<evidence type="ECO:0000250" key="2">
    <source>
        <dbReference type="UniProtKB" id="O95997"/>
    </source>
</evidence>
<evidence type="ECO:0000256" key="3">
    <source>
        <dbReference type="SAM" id="MobiDB-lite"/>
    </source>
</evidence>
<evidence type="ECO:0000305" key="4"/>
<gene>
    <name type="primary">PTTG1</name>
</gene>
<feature type="initiator methionine" description="Removed" evidence="2">
    <location>
        <position position="1"/>
    </location>
</feature>
<feature type="chain" id="PRO_0000285529" description="Securin">
    <location>
        <begin position="2"/>
        <end position="202"/>
    </location>
</feature>
<feature type="region of interest" description="Disordered" evidence="3">
    <location>
        <begin position="35"/>
        <end position="94"/>
    </location>
</feature>
<feature type="short sequence motif" description="D-box">
    <location>
        <begin position="61"/>
        <end position="64"/>
    </location>
</feature>
<feature type="short sequence motif" description="TEK-box 1">
    <location>
        <begin position="71"/>
        <end position="73"/>
    </location>
</feature>
<feature type="short sequence motif" description="TEK-box 2">
    <location>
        <begin position="94"/>
        <end position="96"/>
    </location>
</feature>
<feature type="short sequence motif" description="SH3-binding">
    <location>
        <begin position="163"/>
        <end position="173"/>
    </location>
</feature>
<feature type="modified residue" description="N-acetylalanine" evidence="2">
    <location>
        <position position="2"/>
    </location>
</feature>
<feature type="modified residue" description="Phosphoserine; by CDK1" evidence="2">
    <location>
        <position position="165"/>
    </location>
</feature>
<organism>
    <name type="scientific">Gorilla gorilla gorilla</name>
    <name type="common">Western lowland gorilla</name>
    <dbReference type="NCBI Taxonomy" id="9595"/>
    <lineage>
        <taxon>Eukaryota</taxon>
        <taxon>Metazoa</taxon>
        <taxon>Chordata</taxon>
        <taxon>Craniata</taxon>
        <taxon>Vertebrata</taxon>
        <taxon>Euteleostomi</taxon>
        <taxon>Mammalia</taxon>
        <taxon>Eutheria</taxon>
        <taxon>Euarchontoglires</taxon>
        <taxon>Primates</taxon>
        <taxon>Haplorrhini</taxon>
        <taxon>Catarrhini</taxon>
        <taxon>Hominidae</taxon>
        <taxon>Gorilla</taxon>
    </lineage>
</organism>
<dbReference type="EMBL" id="DQ976507">
    <property type="protein sequence ID" value="ABM46737.1"/>
    <property type="molecule type" value="Genomic_DNA"/>
</dbReference>
<dbReference type="RefSeq" id="XP_004042983.3">
    <property type="nucleotide sequence ID" value="XM_004042935.5"/>
</dbReference>
<dbReference type="RefSeq" id="XP_018884090.3">
    <property type="nucleotide sequence ID" value="XM_019028545.4"/>
</dbReference>
<dbReference type="RefSeq" id="XP_055243499.1">
    <property type="nucleotide sequence ID" value="XM_055387524.2"/>
</dbReference>
<dbReference type="FunCoup" id="A1YF19">
    <property type="interactions" value="1680"/>
</dbReference>
<dbReference type="STRING" id="9593.ENSGGOP00000016528"/>
<dbReference type="GeneID" id="101147591"/>
<dbReference type="eggNOG" id="ENOG502S2GG">
    <property type="taxonomic scope" value="Eukaryota"/>
</dbReference>
<dbReference type="InParanoid" id="A1YF19"/>
<dbReference type="Proteomes" id="UP000001519">
    <property type="component" value="Unplaced"/>
</dbReference>
<dbReference type="GO" id="GO:0005737">
    <property type="term" value="C:cytoplasm"/>
    <property type="evidence" value="ECO:0007669"/>
    <property type="project" value="UniProtKB-SubCell"/>
</dbReference>
<dbReference type="GO" id="GO:0005634">
    <property type="term" value="C:nucleus"/>
    <property type="evidence" value="ECO:0000318"/>
    <property type="project" value="GO_Central"/>
</dbReference>
<dbReference type="GO" id="GO:0017124">
    <property type="term" value="F:SH3 domain binding"/>
    <property type="evidence" value="ECO:0007669"/>
    <property type="project" value="UniProtKB-KW"/>
</dbReference>
<dbReference type="GO" id="GO:0051301">
    <property type="term" value="P:cell division"/>
    <property type="evidence" value="ECO:0007669"/>
    <property type="project" value="UniProtKB-KW"/>
</dbReference>
<dbReference type="GO" id="GO:0051276">
    <property type="term" value="P:chromosome organization"/>
    <property type="evidence" value="ECO:0007669"/>
    <property type="project" value="InterPro"/>
</dbReference>
<dbReference type="GO" id="GO:0006281">
    <property type="term" value="P:DNA repair"/>
    <property type="evidence" value="ECO:0007669"/>
    <property type="project" value="UniProtKB-KW"/>
</dbReference>
<dbReference type="GO" id="GO:0045143">
    <property type="term" value="P:homologous chromosome segregation"/>
    <property type="evidence" value="ECO:0000318"/>
    <property type="project" value="GO_Central"/>
</dbReference>
<dbReference type="InterPro" id="IPR006940">
    <property type="entry name" value="Securin_separation_inhibitor"/>
</dbReference>
<dbReference type="PANTHER" id="PTHR10418:SF7">
    <property type="entry name" value="SECURIN"/>
    <property type="match status" value="1"/>
</dbReference>
<dbReference type="PANTHER" id="PTHR10418">
    <property type="entry name" value="SECURIN-3"/>
    <property type="match status" value="1"/>
</dbReference>
<dbReference type="Pfam" id="PF04856">
    <property type="entry name" value="Securin"/>
    <property type="match status" value="1"/>
</dbReference>
<accession>A1YF19</accession>
<proteinExistence type="inferred from homology"/>
<name>PTTG1_GORGO</name>
<comment type="function">
    <text evidence="1">Regulatory protein, which plays a central role in chromosome stability, in the p53/TP53 pathway, and DNA repair. Probably acts by blocking the action of key proteins. During the mitosis, it blocks Separase/ESPL1 function, preventing the proteolysis of the cohesin complex and the subsequent segregation of the chromosomes. At the onset of anaphase, it is ubiquitinated, conducting to its destruction and to the liberation of ESPL1. Its function is however not limited to a blocking activity, since it is required to activate ESPL1. Negatively regulates the transcriptional activity and related apoptosis activity of TP53. The negative regulation of TP53 may explain the strong transforming capability of the protein when it is overexpressed. May also play a role in DNA repair via its interaction with Ku, possibly by connecting DNA damage-response pathways with sister chromatid separation (By similarity).</text>
</comment>
<comment type="subunit">
    <text evidence="1">Interacts with RPS10 and DNAJA1 (By similarity). Interacts with the caspase-like ESPL1, and prevents its protease activity probably by covering its active site. Interacts with TP53 and blocks its activity probably by blocking its binding to DNA. Interacts with the Ku 70 kDa subunit of ds-DNA kinase. Interacts with PTTG1IP (By similarity).</text>
</comment>
<comment type="subcellular location">
    <subcellularLocation>
        <location evidence="1">Cytoplasm</location>
    </subcellularLocation>
    <subcellularLocation>
        <location evidence="1">Nucleus</location>
    </subcellularLocation>
</comment>
<comment type="domain">
    <text evidence="1">The N-terminal destruction box (D-box) acts as a recognition signal for degradation via the ubiquitin-proteasome pathway.</text>
</comment>
<comment type="domain">
    <text evidence="1">The TEK-boxes are required for 'Lys-11'-linked ubiquitination and facilitate the transfer of the first ubiquitin and ubiquitin chain nucleation. TEK-boxes may direct a catalytically competent orientation of the UBE2C/UBCH10-ubiquitin thioester with the acceptor lysine residue (By similarity).</text>
</comment>
<comment type="PTM">
    <text evidence="1">Phosphorylated at Ser-165 by CDK1 during mitosis.</text>
</comment>
<comment type="PTM">
    <text evidence="1">Phosphorylated in vitro by ds-DNA kinase.</text>
</comment>
<comment type="PTM">
    <text evidence="1">Ubiquitinated through 'Lys-11' linkage of ubiquitin moieties by the anaphase promoting complex (APC) at the onset of anaphase, conducting to its degradation. 'Lys-11'-linked ubiquitination is mediated by the E2 ligase UBE2C/UBCH10 (By similarity).</text>
</comment>
<comment type="similarity">
    <text evidence="4">Belongs to the securin family.</text>
</comment>